<evidence type="ECO:0000250" key="1"/>
<evidence type="ECO:0000269" key="2">
    <source>
    </source>
</evidence>
<evidence type="ECO:0000305" key="3"/>
<comment type="function">
    <text>Plant non-specific lipid-transfer proteins transfer phospholipids as well as galactolipids across membranes. May play a role in wax or cutin deposition in the cell walls of expanding epidermal cells and certain secretory tissues.</text>
</comment>
<comment type="similarity">
    <text evidence="3">Belongs to the plant LTP family.</text>
</comment>
<organism>
    <name type="scientific">Spinacia oleracea</name>
    <name type="common">Spinach</name>
    <dbReference type="NCBI Taxonomy" id="3562"/>
    <lineage>
        <taxon>Eukaryota</taxon>
        <taxon>Viridiplantae</taxon>
        <taxon>Streptophyta</taxon>
        <taxon>Embryophyta</taxon>
        <taxon>Tracheophyta</taxon>
        <taxon>Spermatophyta</taxon>
        <taxon>Magnoliopsida</taxon>
        <taxon>eudicotyledons</taxon>
        <taxon>Gunneridae</taxon>
        <taxon>Pentapetalae</taxon>
        <taxon>Caryophyllales</taxon>
        <taxon>Chenopodiaceae</taxon>
        <taxon>Chenopodioideae</taxon>
        <taxon>Anserineae</taxon>
        <taxon>Spinacia</taxon>
    </lineage>
</organism>
<accession>P10976</accession>
<sequence length="117" mass="11426">MASSAVIKLACAVLLCIVVAAPYAEAGITCGMVSSKLAPCIGYLKGGPLGGGCCGGIKALNAAAATTPDRKTACNCLKSAANAIKGINYGKAAGLPGMCGVHIPYAISPSTNCNAVH</sequence>
<protein>
    <recommendedName>
        <fullName>Non-specific lipid-transfer protein</fullName>
        <shortName>LTP</shortName>
    </recommendedName>
    <alternativeName>
        <fullName>Phospholipid transfer protein</fullName>
        <shortName>PLTP</shortName>
    </alternativeName>
</protein>
<name>NLTP_SPIOL</name>
<dbReference type="EMBL" id="M58635">
    <property type="protein sequence ID" value="AAA34032.1"/>
    <property type="molecule type" value="mRNA"/>
</dbReference>
<dbReference type="PIR" id="T09155">
    <property type="entry name" value="T09155"/>
</dbReference>
<dbReference type="RefSeq" id="NP_001413265.1">
    <property type="nucleotide sequence ID" value="NM_001426336.1"/>
</dbReference>
<dbReference type="SMR" id="P10976"/>
<dbReference type="GeneID" id="110780032"/>
<dbReference type="OrthoDB" id="1890443at2759"/>
<dbReference type="Proteomes" id="UP001155700">
    <property type="component" value="Unplaced"/>
</dbReference>
<dbReference type="GO" id="GO:0008289">
    <property type="term" value="F:lipid binding"/>
    <property type="evidence" value="ECO:0007669"/>
    <property type="project" value="UniProtKB-KW"/>
</dbReference>
<dbReference type="GO" id="GO:0006869">
    <property type="term" value="P:lipid transport"/>
    <property type="evidence" value="ECO:0007669"/>
    <property type="project" value="InterPro"/>
</dbReference>
<dbReference type="CDD" id="cd01960">
    <property type="entry name" value="nsLTP1"/>
    <property type="match status" value="1"/>
</dbReference>
<dbReference type="FunFam" id="1.10.110.10:FF:000002">
    <property type="entry name" value="Non-specific lipid-transfer protein"/>
    <property type="match status" value="1"/>
</dbReference>
<dbReference type="Gene3D" id="1.10.110.10">
    <property type="entry name" value="Plant lipid-transfer and hydrophobic proteins"/>
    <property type="match status" value="1"/>
</dbReference>
<dbReference type="InterPro" id="IPR036312">
    <property type="entry name" value="Bifun_inhib/LTP/seed_sf"/>
</dbReference>
<dbReference type="InterPro" id="IPR016140">
    <property type="entry name" value="Bifunc_inhib/LTP/seed_store"/>
</dbReference>
<dbReference type="InterPro" id="IPR000528">
    <property type="entry name" value="Plant_nsLTP"/>
</dbReference>
<dbReference type="PANTHER" id="PTHR33076">
    <property type="entry name" value="NON-SPECIFIC LIPID-TRANSFER PROTEIN 2-RELATED"/>
    <property type="match status" value="1"/>
</dbReference>
<dbReference type="Pfam" id="PF00234">
    <property type="entry name" value="Tryp_alpha_amyl"/>
    <property type="match status" value="1"/>
</dbReference>
<dbReference type="PRINTS" id="PR00382">
    <property type="entry name" value="LIPIDTRNSFER"/>
</dbReference>
<dbReference type="SMART" id="SM00499">
    <property type="entry name" value="AAI"/>
    <property type="match status" value="1"/>
</dbReference>
<dbReference type="SUPFAM" id="SSF47699">
    <property type="entry name" value="Bifunctional inhibitor/lipid-transfer protein/seed storage 2S albumin"/>
    <property type="match status" value="1"/>
</dbReference>
<dbReference type="PROSITE" id="PS00597">
    <property type="entry name" value="PLANT_LTP"/>
    <property type="match status" value="1"/>
</dbReference>
<proteinExistence type="evidence at protein level"/>
<reference key="1">
    <citation type="journal article" date="1991" name="Plant Physiol.">
        <title>Isolation of a cDNA clone for spinach lipid transfer protein and evidence that the protein is synthesized by the secretory pathway.</title>
        <authorList>
            <person name="Bernhard W.R."/>
            <person name="Thoma S."/>
            <person name="Botella J."/>
            <person name="Somerville C.R."/>
        </authorList>
    </citation>
    <scope>NUCLEOTIDE SEQUENCE [MRNA]</scope>
</reference>
<reference key="2">
    <citation type="journal article" date="1987" name="Eur. J. Biochem.">
        <title>The primary structure of spinach-leaf phospholipid-transfer protein.</title>
        <authorList>
            <person name="Bouillon P."/>
            <person name="Drischel C."/>
            <person name="Vergnolle C."/>
            <person name="Duranton H."/>
            <person name="Kader J.-C."/>
        </authorList>
    </citation>
    <scope>PROTEIN SEQUENCE OF 27-117</scope>
    <source>
        <tissue>Leaf</tissue>
    </source>
</reference>
<keyword id="KW-0903">Direct protein sequencing</keyword>
<keyword id="KW-1015">Disulfide bond</keyword>
<keyword id="KW-0446">Lipid-binding</keyword>
<keyword id="KW-1185">Reference proteome</keyword>
<keyword id="KW-0732">Signal</keyword>
<keyword id="KW-0813">Transport</keyword>
<feature type="signal peptide" evidence="2">
    <location>
        <begin position="1"/>
        <end position="26"/>
    </location>
</feature>
<feature type="chain" id="PRO_0000018409" description="Non-specific lipid-transfer protein">
    <location>
        <begin position="27"/>
        <end position="117"/>
    </location>
</feature>
<feature type="disulfide bond" evidence="1">
    <location>
        <begin position="30"/>
        <end position="76"/>
    </location>
</feature>
<feature type="disulfide bond" evidence="1">
    <location>
        <begin position="40"/>
        <end position="53"/>
    </location>
</feature>
<feature type="disulfide bond" evidence="1">
    <location>
        <begin position="54"/>
        <end position="99"/>
    </location>
</feature>
<feature type="disulfide bond" evidence="1">
    <location>
        <begin position="74"/>
        <end position="113"/>
    </location>
</feature>
<feature type="sequence conflict" description="In Ref. 2; AA sequence." evidence="3" ref="2">
    <original>CC</original>
    <variation>SS</variation>
    <location>
        <begin position="53"/>
        <end position="54"/>
    </location>
</feature>